<name>RL25_GLOC7</name>
<reference key="1">
    <citation type="journal article" date="2011" name="MBio">
        <title>Novel metabolic attributes of the genus Cyanothece, comprising a group of unicellular nitrogen-fixing Cyanobacteria.</title>
        <authorList>
            <person name="Bandyopadhyay A."/>
            <person name="Elvitigala T."/>
            <person name="Welsh E."/>
            <person name="Stockel J."/>
            <person name="Liberton M."/>
            <person name="Min H."/>
            <person name="Sherman L.A."/>
            <person name="Pakrasi H.B."/>
        </authorList>
    </citation>
    <scope>NUCLEOTIDE SEQUENCE [LARGE SCALE GENOMIC DNA]</scope>
    <source>
        <strain>PCC 7424</strain>
    </source>
</reference>
<keyword id="KW-1185">Reference proteome</keyword>
<keyword id="KW-0687">Ribonucleoprotein</keyword>
<keyword id="KW-0689">Ribosomal protein</keyword>
<keyword id="KW-0694">RNA-binding</keyword>
<keyword id="KW-0699">rRNA-binding</keyword>
<feature type="chain" id="PRO_1000142512" description="Large ribosomal subunit protein bL25">
    <location>
        <begin position="1"/>
        <end position="198"/>
    </location>
</feature>
<accession>B7KCY0</accession>
<protein>
    <recommendedName>
        <fullName evidence="1">Large ribosomal subunit protein bL25</fullName>
    </recommendedName>
    <alternativeName>
        <fullName evidence="2">50S ribosomal protein L25</fullName>
    </alternativeName>
    <alternativeName>
        <fullName evidence="1">General stress protein CTC</fullName>
    </alternativeName>
</protein>
<dbReference type="EMBL" id="CP001291">
    <property type="protein sequence ID" value="ACK73101.1"/>
    <property type="molecule type" value="Genomic_DNA"/>
</dbReference>
<dbReference type="RefSeq" id="WP_015956684.1">
    <property type="nucleotide sequence ID" value="NC_011729.1"/>
</dbReference>
<dbReference type="SMR" id="B7KCY0"/>
<dbReference type="STRING" id="65393.PCC7424_4741"/>
<dbReference type="KEGG" id="cyc:PCC7424_4741"/>
<dbReference type="eggNOG" id="COG1825">
    <property type="taxonomic scope" value="Bacteria"/>
</dbReference>
<dbReference type="HOGENOM" id="CLU_075939_2_0_3"/>
<dbReference type="OrthoDB" id="9786489at2"/>
<dbReference type="Proteomes" id="UP000002384">
    <property type="component" value="Chromosome"/>
</dbReference>
<dbReference type="GO" id="GO:0022625">
    <property type="term" value="C:cytosolic large ribosomal subunit"/>
    <property type="evidence" value="ECO:0007669"/>
    <property type="project" value="TreeGrafter"/>
</dbReference>
<dbReference type="GO" id="GO:0008097">
    <property type="term" value="F:5S rRNA binding"/>
    <property type="evidence" value="ECO:0007669"/>
    <property type="project" value="InterPro"/>
</dbReference>
<dbReference type="GO" id="GO:0003735">
    <property type="term" value="F:structural constituent of ribosome"/>
    <property type="evidence" value="ECO:0007669"/>
    <property type="project" value="InterPro"/>
</dbReference>
<dbReference type="GO" id="GO:0006412">
    <property type="term" value="P:translation"/>
    <property type="evidence" value="ECO:0007669"/>
    <property type="project" value="UniProtKB-UniRule"/>
</dbReference>
<dbReference type="CDD" id="cd00495">
    <property type="entry name" value="Ribosomal_L25_TL5_CTC"/>
    <property type="match status" value="1"/>
</dbReference>
<dbReference type="Gene3D" id="2.170.120.20">
    <property type="entry name" value="Ribosomal protein L25, beta domain"/>
    <property type="match status" value="1"/>
</dbReference>
<dbReference type="Gene3D" id="2.40.240.10">
    <property type="entry name" value="Ribosomal Protein L25, Chain P"/>
    <property type="match status" value="1"/>
</dbReference>
<dbReference type="HAMAP" id="MF_01334">
    <property type="entry name" value="Ribosomal_bL25_CTC"/>
    <property type="match status" value="1"/>
</dbReference>
<dbReference type="InterPro" id="IPR020056">
    <property type="entry name" value="Rbsml_bL25/Gln-tRNA_synth_N"/>
</dbReference>
<dbReference type="InterPro" id="IPR011035">
    <property type="entry name" value="Ribosomal_bL25/Gln-tRNA_synth"/>
</dbReference>
<dbReference type="InterPro" id="IPR020057">
    <property type="entry name" value="Ribosomal_bL25_b-dom"/>
</dbReference>
<dbReference type="InterPro" id="IPR037121">
    <property type="entry name" value="Ribosomal_bL25_C"/>
</dbReference>
<dbReference type="InterPro" id="IPR001021">
    <property type="entry name" value="Ribosomal_bL25_long"/>
</dbReference>
<dbReference type="InterPro" id="IPR029751">
    <property type="entry name" value="Ribosomal_L25_dom"/>
</dbReference>
<dbReference type="InterPro" id="IPR020930">
    <property type="entry name" value="Ribosomal_uL5_bac-type"/>
</dbReference>
<dbReference type="NCBIfam" id="TIGR00731">
    <property type="entry name" value="bL25_bact_ctc"/>
    <property type="match status" value="1"/>
</dbReference>
<dbReference type="NCBIfam" id="NF004139">
    <property type="entry name" value="PRK05618.4-2"/>
    <property type="match status" value="1"/>
</dbReference>
<dbReference type="NCBIfam" id="NF004612">
    <property type="entry name" value="PRK05943.1"/>
    <property type="match status" value="1"/>
</dbReference>
<dbReference type="PANTHER" id="PTHR33284">
    <property type="entry name" value="RIBOSOMAL PROTEIN L25/GLN-TRNA SYNTHETASE, ANTI-CODON-BINDING DOMAIN-CONTAINING PROTEIN"/>
    <property type="match status" value="1"/>
</dbReference>
<dbReference type="PANTHER" id="PTHR33284:SF1">
    <property type="entry name" value="RIBOSOMAL PROTEIN L25_GLN-TRNA SYNTHETASE, ANTI-CODON-BINDING DOMAIN-CONTAINING PROTEIN"/>
    <property type="match status" value="1"/>
</dbReference>
<dbReference type="Pfam" id="PF01386">
    <property type="entry name" value="Ribosomal_L25p"/>
    <property type="match status" value="1"/>
</dbReference>
<dbReference type="Pfam" id="PF14693">
    <property type="entry name" value="Ribosomal_TL5_C"/>
    <property type="match status" value="1"/>
</dbReference>
<dbReference type="SUPFAM" id="SSF50715">
    <property type="entry name" value="Ribosomal protein L25-like"/>
    <property type="match status" value="1"/>
</dbReference>
<organism>
    <name type="scientific">Gloeothece citriformis (strain PCC 7424)</name>
    <name type="common">Cyanothece sp. (strain PCC 7424)</name>
    <dbReference type="NCBI Taxonomy" id="65393"/>
    <lineage>
        <taxon>Bacteria</taxon>
        <taxon>Bacillati</taxon>
        <taxon>Cyanobacteriota</taxon>
        <taxon>Cyanophyceae</taxon>
        <taxon>Oscillatoriophycideae</taxon>
        <taxon>Chroococcales</taxon>
        <taxon>Aphanothecaceae</taxon>
        <taxon>Gloeothece</taxon>
        <taxon>Gloeothece citriformis</taxon>
    </lineage>
</organism>
<gene>
    <name evidence="1" type="primary">rplY</name>
    <name evidence="1" type="synonym">ctc</name>
    <name type="ordered locus">PCC7424_4741</name>
</gene>
<evidence type="ECO:0000255" key="1">
    <source>
        <dbReference type="HAMAP-Rule" id="MF_01334"/>
    </source>
</evidence>
<evidence type="ECO:0000305" key="2"/>
<sequence length="198" mass="21451">MQVTIECQKRPEGSKPNTLRRQGLIPAALYGHKGTESISLIIKEKDAQLLLKKASVNNTLVDVNIPDVPWSGKALIREVQTHPWKRFVYHLSFFSVAAHGKIDVVVPLNLVGESSGVKQGGIIEQVITEISVQCLPESIPETIEIDISPLKIGDSISVGDLQLSEGVTYLDDPTQTILTVMAPKKGSATEEETAEASA</sequence>
<comment type="function">
    <text evidence="1">This is one of the proteins that binds to the 5S RNA in the ribosome where it forms part of the central protuberance.</text>
</comment>
<comment type="subunit">
    <text evidence="1">Part of the 50S ribosomal subunit; part of the 5S rRNA/L5/L18/L25 subcomplex. Contacts the 5S rRNA. Binds to the 5S rRNA independently of L5 and L18.</text>
</comment>
<comment type="similarity">
    <text evidence="1">Belongs to the bacterial ribosomal protein bL25 family. CTC subfamily.</text>
</comment>
<proteinExistence type="inferred from homology"/>